<comment type="function">
    <text evidence="1">Catalyzes the formation of phosphatidylethanolamine (PtdEtn) from phosphatidylserine (PtdSer).</text>
</comment>
<comment type="catalytic activity">
    <reaction evidence="1">
        <text>a 1,2-diacyl-sn-glycero-3-phospho-L-serine + H(+) = a 1,2-diacyl-sn-glycero-3-phosphoethanolamine + CO2</text>
        <dbReference type="Rhea" id="RHEA:20828"/>
        <dbReference type="ChEBI" id="CHEBI:15378"/>
        <dbReference type="ChEBI" id="CHEBI:16526"/>
        <dbReference type="ChEBI" id="CHEBI:57262"/>
        <dbReference type="ChEBI" id="CHEBI:64612"/>
        <dbReference type="EC" id="4.1.1.65"/>
    </reaction>
</comment>
<comment type="cofactor">
    <cofactor evidence="1">
        <name>pyruvate</name>
        <dbReference type="ChEBI" id="CHEBI:15361"/>
    </cofactor>
    <text evidence="1">Binds 1 pyruvoyl group covalently per subunit.</text>
</comment>
<comment type="pathway">
    <text evidence="1">Phospholipid metabolism; phosphatidylethanolamine biosynthesis; phosphatidylethanolamine from CDP-diacylglycerol: step 2/2.</text>
</comment>
<comment type="subunit">
    <text evidence="1">Heterodimer of a large membrane-associated beta subunit and a small pyruvoyl-containing alpha subunit.</text>
</comment>
<comment type="subcellular location">
    <subcellularLocation>
        <location evidence="1">Cell membrane</location>
        <topology evidence="1">Peripheral membrane protein</topology>
    </subcellularLocation>
</comment>
<comment type="PTM">
    <text evidence="1">Is synthesized initially as an inactive proenzyme. Formation of the active enzyme involves a self-maturation process in which the active site pyruvoyl group is generated from an internal serine residue via an autocatalytic post-translational modification. Two non-identical subunits are generated from the proenzyme in this reaction, and the pyruvate is formed at the N-terminus of the alpha chain, which is derived from the carboxyl end of the proenzyme. The post-translation cleavage follows an unusual pathway, termed non-hydrolytic serinolysis, in which the side chain hydroxyl group of the serine supplies its oxygen atom to form the C-terminus of the beta chain, while the remainder of the serine residue undergoes an oxidative deamination to produce ammonia and the pyruvoyl prosthetic group on the alpha chain.</text>
</comment>
<comment type="similarity">
    <text evidence="1">Belongs to the phosphatidylserine decarboxylase family. PSD-A subfamily.</text>
</comment>
<dbReference type="EC" id="4.1.1.65" evidence="1"/>
<dbReference type="EMBL" id="CP001068">
    <property type="protein sequence ID" value="ACD27359.1"/>
    <property type="molecule type" value="Genomic_DNA"/>
</dbReference>
<dbReference type="STRING" id="402626.Rpic_2225"/>
<dbReference type="KEGG" id="rpi:Rpic_2225"/>
<dbReference type="eggNOG" id="COG0688">
    <property type="taxonomic scope" value="Bacteria"/>
</dbReference>
<dbReference type="HOGENOM" id="CLU_072492_0_0_4"/>
<dbReference type="UniPathway" id="UPA00558">
    <property type="reaction ID" value="UER00616"/>
</dbReference>
<dbReference type="GO" id="GO:0005886">
    <property type="term" value="C:plasma membrane"/>
    <property type="evidence" value="ECO:0007669"/>
    <property type="project" value="UniProtKB-SubCell"/>
</dbReference>
<dbReference type="GO" id="GO:0004609">
    <property type="term" value="F:phosphatidylserine decarboxylase activity"/>
    <property type="evidence" value="ECO:0007669"/>
    <property type="project" value="UniProtKB-UniRule"/>
</dbReference>
<dbReference type="GO" id="GO:0006646">
    <property type="term" value="P:phosphatidylethanolamine biosynthetic process"/>
    <property type="evidence" value="ECO:0007669"/>
    <property type="project" value="UniProtKB-UniRule"/>
</dbReference>
<dbReference type="HAMAP" id="MF_00664">
    <property type="entry name" value="PS_decarb_PSD_A"/>
    <property type="match status" value="1"/>
</dbReference>
<dbReference type="InterPro" id="IPR003817">
    <property type="entry name" value="PS_Dcarbxylase"/>
</dbReference>
<dbReference type="InterPro" id="IPR033175">
    <property type="entry name" value="PSD-A"/>
</dbReference>
<dbReference type="NCBIfam" id="TIGR00164">
    <property type="entry name" value="AS_decarb"/>
    <property type="match status" value="1"/>
</dbReference>
<dbReference type="NCBIfam" id="NF003678">
    <property type="entry name" value="PRK05305.1-2"/>
    <property type="match status" value="1"/>
</dbReference>
<dbReference type="NCBIfam" id="NF003680">
    <property type="entry name" value="PRK05305.1-5"/>
    <property type="match status" value="1"/>
</dbReference>
<dbReference type="PANTHER" id="PTHR35809">
    <property type="entry name" value="ARCHAETIDYLSERINE DECARBOXYLASE PROENZYME-RELATED"/>
    <property type="match status" value="1"/>
</dbReference>
<dbReference type="PANTHER" id="PTHR35809:SF1">
    <property type="entry name" value="ARCHAETIDYLSERINE DECARBOXYLASE PROENZYME-RELATED"/>
    <property type="match status" value="1"/>
</dbReference>
<dbReference type="Pfam" id="PF02666">
    <property type="entry name" value="PS_Dcarbxylase"/>
    <property type="match status" value="1"/>
</dbReference>
<sequence length="215" mass="23907">MNNTYPHPIIAREGWPYLGGIFIVTLIVQAAAGFGWAWPFWVLTLFVLQFFRDPARAVPTQANAILSPADGRIVAVEQVRDPYADRDSLKISVFMNVFNVHSNRAPVDGTVQQVQYFPGKFVNADLDKASLENERNAIVLRRADGQLVTSVQVAGLIARRILCYTKAGEVLTRGQRYGFIRFGSRVDVYLPLTARPRVTIGEKVSATLTVLAELD</sequence>
<accession>B2U7S2</accession>
<proteinExistence type="inferred from homology"/>
<gene>
    <name evidence="1" type="primary">psd</name>
    <name type="ordered locus">Rpic_2225</name>
</gene>
<organism>
    <name type="scientific">Ralstonia pickettii (strain 12J)</name>
    <dbReference type="NCBI Taxonomy" id="402626"/>
    <lineage>
        <taxon>Bacteria</taxon>
        <taxon>Pseudomonadati</taxon>
        <taxon>Pseudomonadota</taxon>
        <taxon>Betaproteobacteria</taxon>
        <taxon>Burkholderiales</taxon>
        <taxon>Burkholderiaceae</taxon>
        <taxon>Ralstonia</taxon>
    </lineage>
</organism>
<keyword id="KW-1003">Cell membrane</keyword>
<keyword id="KW-0210">Decarboxylase</keyword>
<keyword id="KW-0444">Lipid biosynthesis</keyword>
<keyword id="KW-0443">Lipid metabolism</keyword>
<keyword id="KW-0456">Lyase</keyword>
<keyword id="KW-0472">Membrane</keyword>
<keyword id="KW-0594">Phospholipid biosynthesis</keyword>
<keyword id="KW-1208">Phospholipid metabolism</keyword>
<keyword id="KW-0670">Pyruvate</keyword>
<keyword id="KW-0865">Zymogen</keyword>
<name>PSD_RALPJ</name>
<protein>
    <recommendedName>
        <fullName evidence="1">Phosphatidylserine decarboxylase proenzyme</fullName>
        <ecNumber evidence="1">4.1.1.65</ecNumber>
    </recommendedName>
    <component>
        <recommendedName>
            <fullName evidence="1">Phosphatidylserine decarboxylase alpha chain</fullName>
        </recommendedName>
    </component>
    <component>
        <recommendedName>
            <fullName evidence="1">Phosphatidylserine decarboxylase beta chain</fullName>
        </recommendedName>
    </component>
</protein>
<reference key="1">
    <citation type="submission" date="2008-05" db="EMBL/GenBank/DDBJ databases">
        <title>Complete sequence of chromosome 1 of Ralstonia pickettii 12J.</title>
        <authorList>
            <person name="Lucas S."/>
            <person name="Copeland A."/>
            <person name="Lapidus A."/>
            <person name="Glavina del Rio T."/>
            <person name="Dalin E."/>
            <person name="Tice H."/>
            <person name="Bruce D."/>
            <person name="Goodwin L."/>
            <person name="Pitluck S."/>
            <person name="Meincke L."/>
            <person name="Brettin T."/>
            <person name="Detter J.C."/>
            <person name="Han C."/>
            <person name="Kuske C.R."/>
            <person name="Schmutz J."/>
            <person name="Larimer F."/>
            <person name="Land M."/>
            <person name="Hauser L."/>
            <person name="Kyrpides N."/>
            <person name="Mikhailova N."/>
            <person name="Marsh T."/>
            <person name="Richardson P."/>
        </authorList>
    </citation>
    <scope>NUCLEOTIDE SEQUENCE [LARGE SCALE GENOMIC DNA]</scope>
    <source>
        <strain>12J</strain>
    </source>
</reference>
<evidence type="ECO:0000255" key="1">
    <source>
        <dbReference type="HAMAP-Rule" id="MF_00664"/>
    </source>
</evidence>
<feature type="chain" id="PRO_1000131484" description="Phosphatidylserine decarboxylase beta chain" evidence="1">
    <location>
        <begin position="1"/>
        <end position="183"/>
    </location>
</feature>
<feature type="chain" id="PRO_1000131485" description="Phosphatidylserine decarboxylase alpha chain" evidence="1">
    <location>
        <begin position="184"/>
        <end position="215"/>
    </location>
</feature>
<feature type="active site" description="Schiff-base intermediate with substrate; via pyruvic acid" evidence="1">
    <location>
        <position position="184"/>
    </location>
</feature>
<feature type="site" description="Cleavage (non-hydrolytic); by autocatalysis" evidence="1">
    <location>
        <begin position="183"/>
        <end position="184"/>
    </location>
</feature>
<feature type="modified residue" description="Pyruvic acid (Ser); by autocatalysis" evidence="1">
    <location>
        <position position="184"/>
    </location>
</feature>